<protein>
    <recommendedName>
        <fullName evidence="1">UDP-N-acetylglucosamine 1-carboxyvinyltransferase</fullName>
        <ecNumber evidence="1">2.5.1.7</ecNumber>
    </recommendedName>
    <alternativeName>
        <fullName evidence="1">Enoylpyruvate transferase</fullName>
    </alternativeName>
    <alternativeName>
        <fullName evidence="1">UDP-N-acetylglucosamine enolpyruvyl transferase</fullName>
        <shortName evidence="1">EPT</shortName>
    </alternativeName>
</protein>
<feature type="chain" id="PRO_1000023031" description="UDP-N-acetylglucosamine 1-carboxyvinyltransferase">
    <location>
        <begin position="1"/>
        <end position="417"/>
    </location>
</feature>
<feature type="active site" description="Proton donor" evidence="1">
    <location>
        <position position="115"/>
    </location>
</feature>
<feature type="binding site" evidence="1">
    <location>
        <begin position="22"/>
        <end position="23"/>
    </location>
    <ligand>
        <name>phosphoenolpyruvate</name>
        <dbReference type="ChEBI" id="CHEBI:58702"/>
    </ligand>
</feature>
<feature type="binding site" evidence="1">
    <location>
        <position position="91"/>
    </location>
    <ligand>
        <name>UDP-N-acetyl-alpha-D-glucosamine</name>
        <dbReference type="ChEBI" id="CHEBI:57705"/>
    </ligand>
</feature>
<feature type="binding site" evidence="1">
    <location>
        <begin position="120"/>
        <end position="124"/>
    </location>
    <ligand>
        <name>UDP-N-acetyl-alpha-D-glucosamine</name>
        <dbReference type="ChEBI" id="CHEBI:57705"/>
    </ligand>
</feature>
<feature type="binding site" evidence="1">
    <location>
        <position position="304"/>
    </location>
    <ligand>
        <name>UDP-N-acetyl-alpha-D-glucosamine</name>
        <dbReference type="ChEBI" id="CHEBI:57705"/>
    </ligand>
</feature>
<feature type="binding site" evidence="1">
    <location>
        <position position="326"/>
    </location>
    <ligand>
        <name>UDP-N-acetyl-alpha-D-glucosamine</name>
        <dbReference type="ChEBI" id="CHEBI:57705"/>
    </ligand>
</feature>
<feature type="modified residue" description="2-(S-cysteinyl)pyruvic acid O-phosphothioketal" evidence="1">
    <location>
        <position position="115"/>
    </location>
</feature>
<sequence>MDKLVIEGGVPLTGTINVSGSKNAALPILMASILAEEPLTYTNVPRLRDIHTTNKLLSILGCPAEFEGDTVSVRPCDLKPEAPYDLVKTMRASVLCLGPLLARLGEARVALPGGCAIGARPVDLHLTALEKMGARFELEEGYIIGRCRKLKGAHIYFDFPTVGGTENLLMAATLAEGETILENAAREPEVVDLARFLIACGAKIEGHGTSVIRIQGVPRLHGCEYAIMPDRIEAGTFLVAAGITGGELLLTGCPWEELDAVIVKLNAMGMHIEKTSEGVLAKRRNGGLRGTDVTTQPFPGFPTDMQAQVMSLMCLAEGTSVVQENIFENRFMHVLELVRMGADIRISGRSAVVRGVKRLTGAPVMASDLRASASLVLAGLAARGTTHVQRIYHLDRGYERIELKLNAVGARIRREAE</sequence>
<accession>A1V9N9</accession>
<dbReference type="EC" id="2.5.1.7" evidence="1"/>
<dbReference type="EMBL" id="CP000527">
    <property type="protein sequence ID" value="ABM27155.1"/>
    <property type="molecule type" value="Genomic_DNA"/>
</dbReference>
<dbReference type="RefSeq" id="WP_011791413.1">
    <property type="nucleotide sequence ID" value="NC_008751.1"/>
</dbReference>
<dbReference type="SMR" id="A1V9N9"/>
<dbReference type="KEGG" id="dvl:Dvul_0131"/>
<dbReference type="HOGENOM" id="CLU_027387_0_0_7"/>
<dbReference type="UniPathway" id="UPA00219"/>
<dbReference type="Proteomes" id="UP000009173">
    <property type="component" value="Chromosome"/>
</dbReference>
<dbReference type="GO" id="GO:0005737">
    <property type="term" value="C:cytoplasm"/>
    <property type="evidence" value="ECO:0007669"/>
    <property type="project" value="UniProtKB-SubCell"/>
</dbReference>
<dbReference type="GO" id="GO:0008760">
    <property type="term" value="F:UDP-N-acetylglucosamine 1-carboxyvinyltransferase activity"/>
    <property type="evidence" value="ECO:0007669"/>
    <property type="project" value="UniProtKB-UniRule"/>
</dbReference>
<dbReference type="GO" id="GO:0051301">
    <property type="term" value="P:cell division"/>
    <property type="evidence" value="ECO:0007669"/>
    <property type="project" value="UniProtKB-KW"/>
</dbReference>
<dbReference type="GO" id="GO:0071555">
    <property type="term" value="P:cell wall organization"/>
    <property type="evidence" value="ECO:0007669"/>
    <property type="project" value="UniProtKB-KW"/>
</dbReference>
<dbReference type="GO" id="GO:0009252">
    <property type="term" value="P:peptidoglycan biosynthetic process"/>
    <property type="evidence" value="ECO:0007669"/>
    <property type="project" value="UniProtKB-UniRule"/>
</dbReference>
<dbReference type="GO" id="GO:0008360">
    <property type="term" value="P:regulation of cell shape"/>
    <property type="evidence" value="ECO:0007669"/>
    <property type="project" value="UniProtKB-KW"/>
</dbReference>
<dbReference type="GO" id="GO:0019277">
    <property type="term" value="P:UDP-N-acetylgalactosamine biosynthetic process"/>
    <property type="evidence" value="ECO:0007669"/>
    <property type="project" value="InterPro"/>
</dbReference>
<dbReference type="CDD" id="cd01555">
    <property type="entry name" value="UdpNAET"/>
    <property type="match status" value="1"/>
</dbReference>
<dbReference type="FunFam" id="3.65.10.10:FF:000001">
    <property type="entry name" value="UDP-N-acetylglucosamine 1-carboxyvinyltransferase"/>
    <property type="match status" value="1"/>
</dbReference>
<dbReference type="Gene3D" id="3.65.10.10">
    <property type="entry name" value="Enolpyruvate transferase domain"/>
    <property type="match status" value="2"/>
</dbReference>
<dbReference type="HAMAP" id="MF_00111">
    <property type="entry name" value="MurA"/>
    <property type="match status" value="1"/>
</dbReference>
<dbReference type="InterPro" id="IPR001986">
    <property type="entry name" value="Enolpyruvate_Tfrase_dom"/>
</dbReference>
<dbReference type="InterPro" id="IPR036968">
    <property type="entry name" value="Enolpyruvate_Tfrase_sf"/>
</dbReference>
<dbReference type="InterPro" id="IPR050068">
    <property type="entry name" value="MurA_subfamily"/>
</dbReference>
<dbReference type="InterPro" id="IPR013792">
    <property type="entry name" value="RNA3'P_cycl/enolpyr_Trfase_a/b"/>
</dbReference>
<dbReference type="InterPro" id="IPR005750">
    <property type="entry name" value="UDP_GlcNAc_COvinyl_MurA"/>
</dbReference>
<dbReference type="NCBIfam" id="TIGR01072">
    <property type="entry name" value="murA"/>
    <property type="match status" value="1"/>
</dbReference>
<dbReference type="NCBIfam" id="NF006873">
    <property type="entry name" value="PRK09369.1"/>
    <property type="match status" value="1"/>
</dbReference>
<dbReference type="PANTHER" id="PTHR43783">
    <property type="entry name" value="UDP-N-ACETYLGLUCOSAMINE 1-CARBOXYVINYLTRANSFERASE"/>
    <property type="match status" value="1"/>
</dbReference>
<dbReference type="PANTHER" id="PTHR43783:SF1">
    <property type="entry name" value="UDP-N-ACETYLGLUCOSAMINE 1-CARBOXYVINYLTRANSFERASE"/>
    <property type="match status" value="1"/>
</dbReference>
<dbReference type="Pfam" id="PF00275">
    <property type="entry name" value="EPSP_synthase"/>
    <property type="match status" value="1"/>
</dbReference>
<dbReference type="SUPFAM" id="SSF55205">
    <property type="entry name" value="EPT/RTPC-like"/>
    <property type="match status" value="1"/>
</dbReference>
<comment type="function">
    <text evidence="1">Cell wall formation. Adds enolpyruvyl to UDP-N-acetylglucosamine.</text>
</comment>
<comment type="catalytic activity">
    <reaction evidence="1">
        <text>phosphoenolpyruvate + UDP-N-acetyl-alpha-D-glucosamine = UDP-N-acetyl-3-O-(1-carboxyvinyl)-alpha-D-glucosamine + phosphate</text>
        <dbReference type="Rhea" id="RHEA:18681"/>
        <dbReference type="ChEBI" id="CHEBI:43474"/>
        <dbReference type="ChEBI" id="CHEBI:57705"/>
        <dbReference type="ChEBI" id="CHEBI:58702"/>
        <dbReference type="ChEBI" id="CHEBI:68483"/>
        <dbReference type="EC" id="2.5.1.7"/>
    </reaction>
</comment>
<comment type="pathway">
    <text evidence="1">Cell wall biogenesis; peptidoglycan biosynthesis.</text>
</comment>
<comment type="subcellular location">
    <subcellularLocation>
        <location evidence="1">Cytoplasm</location>
    </subcellularLocation>
</comment>
<comment type="similarity">
    <text evidence="1">Belongs to the EPSP synthase family. MurA subfamily.</text>
</comment>
<organism>
    <name type="scientific">Nitratidesulfovibrio vulgaris (strain DP4)</name>
    <name type="common">Desulfovibrio vulgaris</name>
    <dbReference type="NCBI Taxonomy" id="391774"/>
    <lineage>
        <taxon>Bacteria</taxon>
        <taxon>Pseudomonadati</taxon>
        <taxon>Thermodesulfobacteriota</taxon>
        <taxon>Desulfovibrionia</taxon>
        <taxon>Desulfovibrionales</taxon>
        <taxon>Desulfovibrionaceae</taxon>
        <taxon>Nitratidesulfovibrio</taxon>
    </lineage>
</organism>
<gene>
    <name evidence="1" type="primary">murA</name>
    <name type="ordered locus">Dvul_0131</name>
</gene>
<proteinExistence type="inferred from homology"/>
<evidence type="ECO:0000255" key="1">
    <source>
        <dbReference type="HAMAP-Rule" id="MF_00111"/>
    </source>
</evidence>
<name>MURA_NITV4</name>
<reference key="1">
    <citation type="journal article" date="2009" name="Environ. Microbiol.">
        <title>Contribution of mobile genetic elements to Desulfovibrio vulgaris genome plasticity.</title>
        <authorList>
            <person name="Walker C.B."/>
            <person name="Stolyar S."/>
            <person name="Chivian D."/>
            <person name="Pinel N."/>
            <person name="Gabster J.A."/>
            <person name="Dehal P.S."/>
            <person name="He Z."/>
            <person name="Yang Z.K."/>
            <person name="Yen H.C."/>
            <person name="Zhou J."/>
            <person name="Wall J.D."/>
            <person name="Hazen T.C."/>
            <person name="Arkin A.P."/>
            <person name="Stahl D.A."/>
        </authorList>
    </citation>
    <scope>NUCLEOTIDE SEQUENCE [LARGE SCALE GENOMIC DNA]</scope>
    <source>
        <strain>DP4</strain>
    </source>
</reference>
<keyword id="KW-0131">Cell cycle</keyword>
<keyword id="KW-0132">Cell division</keyword>
<keyword id="KW-0133">Cell shape</keyword>
<keyword id="KW-0961">Cell wall biogenesis/degradation</keyword>
<keyword id="KW-0963">Cytoplasm</keyword>
<keyword id="KW-0573">Peptidoglycan synthesis</keyword>
<keyword id="KW-0670">Pyruvate</keyword>
<keyword id="KW-0808">Transferase</keyword>